<protein>
    <recommendedName>
        <fullName evidence="1">Large ribosomal subunit protein uL2</fullName>
    </recommendedName>
    <alternativeName>
        <fullName evidence="3">50S ribosomal protein L2</fullName>
    </alternativeName>
</protein>
<proteinExistence type="inferred from homology"/>
<evidence type="ECO:0000255" key="1">
    <source>
        <dbReference type="HAMAP-Rule" id="MF_01320"/>
    </source>
</evidence>
<evidence type="ECO:0000256" key="2">
    <source>
        <dbReference type="SAM" id="MobiDB-lite"/>
    </source>
</evidence>
<evidence type="ECO:0000305" key="3"/>
<gene>
    <name evidence="1" type="primary">rplB</name>
    <name type="ordered locus">Daud_0228</name>
</gene>
<feature type="chain" id="PRO_1000141538" description="Large ribosomal subunit protein uL2">
    <location>
        <begin position="1"/>
        <end position="275"/>
    </location>
</feature>
<feature type="region of interest" description="Disordered" evidence="2">
    <location>
        <begin position="225"/>
        <end position="275"/>
    </location>
</feature>
<feature type="compositionally biased region" description="Basic residues" evidence="2">
    <location>
        <begin position="258"/>
        <end position="275"/>
    </location>
</feature>
<name>RL2_DESAP</name>
<accession>B1I1J1</accession>
<sequence length="275" mass="30048">MATKKFKPTSPGRRFVTVSDFREVTVTEPEKSLVEPLRKKAGRNFQGRVTVRHRGGGHKRLYRVIDFKRNKDGVPGKVATIEYDPNRSANIALVNYADGEKRYIVAPAGLKVGQEIMSGPQADIKVGNALPLRNIPPGVLIHNIELYPGHGARVVRSAGGSAQLMAKEGDYAHVRLPSGEVRLFPLDCRATIGQVGNVEHENIVIGKAGRARWLGIRPTVRGVVMNPVDHPHGGGEGRSPIGRPPVTPWGKPALGTRTRNKKKASSKLIVKRRTK</sequence>
<dbReference type="EMBL" id="CP000860">
    <property type="protein sequence ID" value="ACA58789.1"/>
    <property type="molecule type" value="Genomic_DNA"/>
</dbReference>
<dbReference type="RefSeq" id="WP_012301381.1">
    <property type="nucleotide sequence ID" value="NC_010424.1"/>
</dbReference>
<dbReference type="SMR" id="B1I1J1"/>
<dbReference type="STRING" id="477974.Daud_0228"/>
<dbReference type="KEGG" id="dau:Daud_0228"/>
<dbReference type="eggNOG" id="COG0090">
    <property type="taxonomic scope" value="Bacteria"/>
</dbReference>
<dbReference type="HOGENOM" id="CLU_036235_2_1_9"/>
<dbReference type="OrthoDB" id="9778722at2"/>
<dbReference type="Proteomes" id="UP000008544">
    <property type="component" value="Chromosome"/>
</dbReference>
<dbReference type="GO" id="GO:0015934">
    <property type="term" value="C:large ribosomal subunit"/>
    <property type="evidence" value="ECO:0007669"/>
    <property type="project" value="InterPro"/>
</dbReference>
<dbReference type="GO" id="GO:0019843">
    <property type="term" value="F:rRNA binding"/>
    <property type="evidence" value="ECO:0007669"/>
    <property type="project" value="UniProtKB-UniRule"/>
</dbReference>
<dbReference type="GO" id="GO:0003735">
    <property type="term" value="F:structural constituent of ribosome"/>
    <property type="evidence" value="ECO:0007669"/>
    <property type="project" value="InterPro"/>
</dbReference>
<dbReference type="GO" id="GO:0016740">
    <property type="term" value="F:transferase activity"/>
    <property type="evidence" value="ECO:0007669"/>
    <property type="project" value="InterPro"/>
</dbReference>
<dbReference type="GO" id="GO:0002181">
    <property type="term" value="P:cytoplasmic translation"/>
    <property type="evidence" value="ECO:0007669"/>
    <property type="project" value="TreeGrafter"/>
</dbReference>
<dbReference type="FunFam" id="2.30.30.30:FF:000001">
    <property type="entry name" value="50S ribosomal protein L2"/>
    <property type="match status" value="1"/>
</dbReference>
<dbReference type="FunFam" id="2.40.50.140:FF:000003">
    <property type="entry name" value="50S ribosomal protein L2"/>
    <property type="match status" value="1"/>
</dbReference>
<dbReference type="FunFam" id="4.10.950.10:FF:000001">
    <property type="entry name" value="50S ribosomal protein L2"/>
    <property type="match status" value="1"/>
</dbReference>
<dbReference type="Gene3D" id="2.30.30.30">
    <property type="match status" value="1"/>
</dbReference>
<dbReference type="Gene3D" id="2.40.50.140">
    <property type="entry name" value="Nucleic acid-binding proteins"/>
    <property type="match status" value="1"/>
</dbReference>
<dbReference type="Gene3D" id="4.10.950.10">
    <property type="entry name" value="Ribosomal protein L2, domain 3"/>
    <property type="match status" value="1"/>
</dbReference>
<dbReference type="HAMAP" id="MF_01320_B">
    <property type="entry name" value="Ribosomal_uL2_B"/>
    <property type="match status" value="1"/>
</dbReference>
<dbReference type="InterPro" id="IPR012340">
    <property type="entry name" value="NA-bd_OB-fold"/>
</dbReference>
<dbReference type="InterPro" id="IPR014722">
    <property type="entry name" value="Rib_uL2_dom2"/>
</dbReference>
<dbReference type="InterPro" id="IPR002171">
    <property type="entry name" value="Ribosomal_uL2"/>
</dbReference>
<dbReference type="InterPro" id="IPR005880">
    <property type="entry name" value="Ribosomal_uL2_bac/org-type"/>
</dbReference>
<dbReference type="InterPro" id="IPR022669">
    <property type="entry name" value="Ribosomal_uL2_C"/>
</dbReference>
<dbReference type="InterPro" id="IPR022671">
    <property type="entry name" value="Ribosomal_uL2_CS"/>
</dbReference>
<dbReference type="InterPro" id="IPR014726">
    <property type="entry name" value="Ribosomal_uL2_dom3"/>
</dbReference>
<dbReference type="InterPro" id="IPR022666">
    <property type="entry name" value="Ribosomal_uL2_RNA-bd_dom"/>
</dbReference>
<dbReference type="InterPro" id="IPR008991">
    <property type="entry name" value="Translation_prot_SH3-like_sf"/>
</dbReference>
<dbReference type="NCBIfam" id="TIGR01171">
    <property type="entry name" value="rplB_bact"/>
    <property type="match status" value="1"/>
</dbReference>
<dbReference type="PANTHER" id="PTHR13691:SF5">
    <property type="entry name" value="LARGE RIBOSOMAL SUBUNIT PROTEIN UL2M"/>
    <property type="match status" value="1"/>
</dbReference>
<dbReference type="PANTHER" id="PTHR13691">
    <property type="entry name" value="RIBOSOMAL PROTEIN L2"/>
    <property type="match status" value="1"/>
</dbReference>
<dbReference type="Pfam" id="PF00181">
    <property type="entry name" value="Ribosomal_L2"/>
    <property type="match status" value="1"/>
</dbReference>
<dbReference type="Pfam" id="PF03947">
    <property type="entry name" value="Ribosomal_L2_C"/>
    <property type="match status" value="1"/>
</dbReference>
<dbReference type="PIRSF" id="PIRSF002158">
    <property type="entry name" value="Ribosomal_L2"/>
    <property type="match status" value="1"/>
</dbReference>
<dbReference type="SMART" id="SM01383">
    <property type="entry name" value="Ribosomal_L2"/>
    <property type="match status" value="1"/>
</dbReference>
<dbReference type="SMART" id="SM01382">
    <property type="entry name" value="Ribosomal_L2_C"/>
    <property type="match status" value="1"/>
</dbReference>
<dbReference type="SUPFAM" id="SSF50249">
    <property type="entry name" value="Nucleic acid-binding proteins"/>
    <property type="match status" value="1"/>
</dbReference>
<dbReference type="SUPFAM" id="SSF50104">
    <property type="entry name" value="Translation proteins SH3-like domain"/>
    <property type="match status" value="1"/>
</dbReference>
<dbReference type="PROSITE" id="PS00467">
    <property type="entry name" value="RIBOSOMAL_L2"/>
    <property type="match status" value="1"/>
</dbReference>
<reference key="1">
    <citation type="submission" date="2007-10" db="EMBL/GenBank/DDBJ databases">
        <title>Complete sequence of chromosome of Desulforudis audaxviator MP104C.</title>
        <authorList>
            <person name="Copeland A."/>
            <person name="Lucas S."/>
            <person name="Lapidus A."/>
            <person name="Barry K."/>
            <person name="Glavina del Rio T."/>
            <person name="Dalin E."/>
            <person name="Tice H."/>
            <person name="Bruce D."/>
            <person name="Pitluck S."/>
            <person name="Lowry S.R."/>
            <person name="Larimer F."/>
            <person name="Land M.L."/>
            <person name="Hauser L."/>
            <person name="Kyrpides N."/>
            <person name="Ivanova N.N."/>
            <person name="Richardson P."/>
        </authorList>
    </citation>
    <scope>NUCLEOTIDE SEQUENCE [LARGE SCALE GENOMIC DNA]</scope>
    <source>
        <strain>MP104C</strain>
    </source>
</reference>
<keyword id="KW-1185">Reference proteome</keyword>
<keyword id="KW-0687">Ribonucleoprotein</keyword>
<keyword id="KW-0689">Ribosomal protein</keyword>
<keyword id="KW-0694">RNA-binding</keyword>
<keyword id="KW-0699">rRNA-binding</keyword>
<comment type="function">
    <text evidence="1">One of the primary rRNA binding proteins. Required for association of the 30S and 50S subunits to form the 70S ribosome, for tRNA binding and peptide bond formation. It has been suggested to have peptidyltransferase activity; this is somewhat controversial. Makes several contacts with the 16S rRNA in the 70S ribosome.</text>
</comment>
<comment type="subunit">
    <text evidence="1">Part of the 50S ribosomal subunit. Forms a bridge to the 30S subunit in the 70S ribosome.</text>
</comment>
<comment type="similarity">
    <text evidence="1">Belongs to the universal ribosomal protein uL2 family.</text>
</comment>
<organism>
    <name type="scientific">Desulforudis audaxviator (strain MP104C)</name>
    <dbReference type="NCBI Taxonomy" id="477974"/>
    <lineage>
        <taxon>Bacteria</taxon>
        <taxon>Bacillati</taxon>
        <taxon>Bacillota</taxon>
        <taxon>Clostridia</taxon>
        <taxon>Thermoanaerobacterales</taxon>
        <taxon>Candidatus Desulforudaceae</taxon>
        <taxon>Candidatus Desulforudis</taxon>
    </lineage>
</organism>